<comment type="function">
    <text>Bacterial hemolysins are exotoxins that attack blood cell membranes and cause cell rupture. Constitutes an essential virulence factor in gas gangrene. Binds to eukaryotic membranes where it hydrolyzes both phosphatidylcholine and sphingomyelin. The diacylglycerol produced can activate both the arachidonic acid pathway, leading to modulation of the inflammatory response cascade and thrombosis, and protein kinase C, leading to activation of eukaryotic phospholipases and further membrane damage. Acts on human and mouse erythrocytes, but not on rabbit or horse erythrocytes.</text>
</comment>
<comment type="catalytic activity">
    <reaction>
        <text>a 1,2-diacyl-sn-glycero-3-phosphocholine + H2O = phosphocholine + a 1,2-diacyl-sn-glycerol + H(+)</text>
        <dbReference type="Rhea" id="RHEA:10604"/>
        <dbReference type="ChEBI" id="CHEBI:15377"/>
        <dbReference type="ChEBI" id="CHEBI:15378"/>
        <dbReference type="ChEBI" id="CHEBI:17815"/>
        <dbReference type="ChEBI" id="CHEBI:57643"/>
        <dbReference type="ChEBI" id="CHEBI:295975"/>
        <dbReference type="EC" id="3.1.4.3"/>
    </reaction>
</comment>
<comment type="cofactor">
    <cofactor>
        <name>Ca(2+)</name>
        <dbReference type="ChEBI" id="CHEBI:29108"/>
    </cofactor>
    <text>Binds 3 Ca(2+) ions per subunit.</text>
</comment>
<comment type="cofactor">
    <cofactor>
        <name>Zn(2+)</name>
        <dbReference type="ChEBI" id="CHEBI:29105"/>
    </cofactor>
    <text>Binds 3 Zn(2+) ions per subunit.</text>
</comment>
<comment type="subcellular location">
    <subcellularLocation>
        <location>Secreted</location>
    </subcellularLocation>
</comment>
<comment type="domain">
    <text>The protein is composed of 2 domains; the N-terminal domain contains the phospholipase C active site (PLC), in a cleft which is also occupied by the 3 zinc ions. The C-terminal domain is a putative phospholipid-recognition domain, which shows structural homology with phospholipid-binding C2-like domains from a range of eukaryotic proteins. The ability to bind membrane phospholipids in a Ca(2+) dependent manner and toxicity is conferred by this C-terminal domain, which also contributes to the sphingomyelinase activity.</text>
</comment>
<comment type="biotechnology">
    <text>Vaccination of mice with a fragment (residues 275-398) protects them against a subsequent challenge with purified alpha-toxin.</text>
</comment>
<comment type="miscellaneous">
    <text>Two main forms of alpha-toxin can be purified from C.perfringens; a major form with a pI of 5.48, and a minor form with a pI of 5.6. Both are equally active. Variations seen in PLC activity between different strains may be due to transcriptional regulation.</text>
</comment>
<comment type="miscellaneous">
    <text>Mutating residues 303 or 359 of the C.perfringens toxin to match those found in C.bifermentans (301 and 358 respectively) reduces toxicity considerably.</text>
</comment>
<comment type="similarity">
    <text evidence="2">Belongs to the bacterial zinc-metallophospholipase C family.</text>
</comment>
<keyword id="KW-0002">3D-structure</keyword>
<keyword id="KW-0106">Calcium</keyword>
<keyword id="KW-0204">Cytolysis</keyword>
<keyword id="KW-0903">Direct protein sequencing</keyword>
<keyword id="KW-0354">Hemolysis</keyword>
<keyword id="KW-0378">Hydrolase</keyword>
<keyword id="KW-0479">Metal-binding</keyword>
<keyword id="KW-0964">Secreted</keyword>
<keyword id="KW-0732">Signal</keyword>
<keyword id="KW-0800">Toxin</keyword>
<keyword id="KW-0843">Virulence</keyword>
<keyword id="KW-0862">Zinc</keyword>
<name>PHLC_CLOP1</name>
<sequence length="398" mass="45476">MKRKICKALICAALATSLWAGASTKVYAWDGKIDGTGTHAMIVTQGVSILENDLSKNEPESVRKNLEILKENMHELQLGSTYPDYDKNAYDLYQDHFWDPDTDNNFSKDNSWYLAYSIPDTGESQIRKFSALARYEWQRGNYKQATFYLGEAMHYFGDIDTPYHPANVTAVDSAGHVKFETFAEERKEQYKINTAGCKTNEAFYTDILKNKDFNAWSKEYARGFAKTGKSIYYSHASMSHSWDDWDYAAKVTLANSQKGTAGYIYRFLHDVSEGNDPSVGKNVKELVAYISTSGEKDAGTDDYMYFGIKTKDGKTQEWEMDNPGNDFMTGSKDTYTFKLKDENLKIDDIQNMWIRKRKYTAFSDAYKPENIKIIANGKVVVDKDINEWISGNSTYNIK</sequence>
<reference key="1">
    <citation type="journal article" date="1989" name="Biochem. Biophys. Res. Commun.">
        <title>Cloning and sequencing of a phospholipase C gene of Clostridium perfringens.</title>
        <authorList>
            <person name="Okabe A."/>
            <person name="Shimizu T."/>
            <person name="Hayashi H."/>
        </authorList>
    </citation>
    <scope>NUCLEOTIDE SEQUENCE [GENOMIC DNA]</scope>
    <scope>PROTEIN SEQUENCE OF 29-39</scope>
</reference>
<reference key="2">
    <citation type="journal article" date="1989" name="Infect. Immun.">
        <title>Molecular cloning and nucleotide sequence of the alpha-toxin (phospholipase C) of Clostridium perfringens.</title>
        <authorList>
            <person name="Titball R.W."/>
            <person name="Hunter S.E.C."/>
            <person name="Martin K.L."/>
            <person name="Morris B.C."/>
            <person name="Shuttleworth A.D."/>
            <person name="Rubidge T."/>
            <person name="Anderson D.W."/>
            <person name="Kelly D.C."/>
        </authorList>
    </citation>
    <scope>NUCLEOTIDE SEQUENCE [GENOMIC DNA]</scope>
    <scope>PROTEIN SEQUENCE OF 29-53</scope>
</reference>
<reference key="3">
    <citation type="journal article" date="1989" name="Infect. Immun.">
        <title>Cloning and expression of the phospholipase C gene from Clostridium perfringens and Clostridium bifermentans.</title>
        <authorList>
            <person name="Tso J.Y."/>
            <person name="Siebel C."/>
        </authorList>
    </citation>
    <scope>NUCLEOTIDE SEQUENCE [GENOMIC DNA]</scope>
    <scope>CHARACTERIZATION</scope>
    <source>
        <strain>strain ATCC 13124 / DSM 756 / JCM 1290 / NCIMB 6125 / NCTC 8237 / Type A</strain>
    </source>
</reference>
<reference key="4">
    <citation type="journal article" date="1989" name="Mol. Microbiol.">
        <title>Phospholipase C and haemolytic activities of Clostridium perfringens alpha-toxin cloned in Escherichia coli: sequence and homology with a Bacillus cereus phospholipase C.</title>
        <authorList>
            <person name="Leslie D."/>
            <person name="Fairweather N."/>
            <person name="Pickard D."/>
            <person name="Dougan G."/>
            <person name="Kehoe M."/>
        </authorList>
    </citation>
    <scope>NUCLEOTIDE SEQUENCE [GENOMIC DNA]</scope>
</reference>
<reference key="5">
    <citation type="journal article" date="2006" name="Genome Res.">
        <title>Skewed genomic variability in strains of the toxigenic bacterial pathogen, Clostridium perfringens.</title>
        <authorList>
            <person name="Myers G.S.A."/>
            <person name="Rasko D.A."/>
            <person name="Cheung J.K."/>
            <person name="Ravel J."/>
            <person name="Seshadri R."/>
            <person name="DeBoy R.T."/>
            <person name="Ren Q."/>
            <person name="Varga J."/>
            <person name="Awad M.M."/>
            <person name="Brinkac L.M."/>
            <person name="Daugherty S.C."/>
            <person name="Haft D.H."/>
            <person name="Dodson R.J."/>
            <person name="Madupu R."/>
            <person name="Nelson W.C."/>
            <person name="Rosovitz M.J."/>
            <person name="Sullivan S.A."/>
            <person name="Khouri H."/>
            <person name="Dimitrov G.I."/>
            <person name="Watkins K.L."/>
            <person name="Mulligan S."/>
            <person name="Benton J."/>
            <person name="Radune D."/>
            <person name="Fisher D.J."/>
            <person name="Atkins H.S."/>
            <person name="Hiscox T."/>
            <person name="Jost B.H."/>
            <person name="Billington S.J."/>
            <person name="Songer J.G."/>
            <person name="McClane B.A."/>
            <person name="Titball R.W."/>
            <person name="Rood J.I."/>
            <person name="Melville S.B."/>
            <person name="Paulsen I.T."/>
        </authorList>
    </citation>
    <scope>NUCLEOTIDE SEQUENCE [LARGE SCALE GENOMIC DNA]</scope>
    <source>
        <strain>ATCC 13124 / DSM 756 / JCM 1290 / NCIMB 6125 / NCTC 8237 / S 107 / Type A</strain>
    </source>
</reference>
<reference key="6">
    <citation type="journal article" date="1995" name="J. Bacteriol.">
        <title>Site-directed mutagenesis of histidine residues in Clostridium perfringens alpha-toxin.</title>
        <authorList>
            <person name="Nagahama M."/>
            <person name="Okagawa Y."/>
            <person name="Nakayama T."/>
            <person name="Nishioka E."/>
            <person name="Sakurai J."/>
        </authorList>
    </citation>
    <scope>MUTAGENESIS OF HISTIDINE RESIDUES</scope>
</reference>
<reference key="7">
    <citation type="journal article" date="1996" name="Microbiology">
        <title>Molecular variation between the alpha-toxins from the type strain (NCTC 8237) and clinical isolates of Clostridium perfringens associated with disease in man and animals.</title>
        <authorList>
            <person name="Ginter A."/>
            <person name="Williamson E.D."/>
            <person name="Dessy F."/>
            <person name="Coppe P."/>
            <person name="Bullifent H."/>
            <person name="Howells A.M."/>
            <person name="Titball R.W."/>
        </authorList>
    </citation>
    <scope>ACTIVITY AGAINST MOUSE ERYTHROCYTES</scope>
    <scope>USE AS A VACCINE</scope>
</reference>
<reference key="8">
    <citation type="journal article" date="2000" name="Eur. J. Biochem.">
        <title>Identification of residues critical for toxicity in Clostridium perfringens phospholipase C, the key toxin in gas gangrene.</title>
        <authorList>
            <person name="Alape-Giron A."/>
            <person name="Flores-Diaz M."/>
            <person name="Guillouard I."/>
            <person name="Naylor C.E."/>
            <person name="Titball R.W."/>
            <person name="Rucavado A."/>
            <person name="Lomonte B."/>
            <person name="Basak A.K."/>
            <person name="Gutierrez J.M."/>
            <person name="Cole S.T."/>
            <person name="Thelestam M."/>
        </authorList>
    </citation>
    <scope>MUTAGENESIS OF ASP-297; TYR-303; TYR-335; TYR-359 AND ASP-364</scope>
</reference>
<reference key="9">
    <citation type="journal article" date="2000" name="Arch. Biochem. Biophys.">
        <title>Identification of residues in the carboxy-terminal domain of Clostridium perfringens alpha-toxin (phospholipase C) which are required for its biological activities.</title>
        <authorList>
            <person name="Walker N."/>
            <person name="Holley J."/>
            <person name="Naylor C.E."/>
            <person name="Flores-Diaz M."/>
            <person name="Alape-Giron A."/>
            <person name="Carter G."/>
            <person name="Carr F.J."/>
            <person name="Thelestam M."/>
            <person name="Keyte M."/>
            <person name="Moss D.S."/>
            <person name="Basak A.K."/>
            <person name="Miller J."/>
            <person name="Titball R.W."/>
        </authorList>
    </citation>
    <scope>MUTAGENESIS OF ASP-321; ASP-333 AND LYS-358</scope>
</reference>
<reference key="10">
    <citation type="journal article" date="2001" name="FEBS Lett.">
        <title>Tyrosine 331 and phenylalanine 334 in Clostridium perfringens alpha-toxin are essential for cytotoxic activity.</title>
        <authorList>
            <person name="Jepson M."/>
            <person name="Bullifent H.L."/>
            <person name="Crane D.T."/>
            <person name="Flores-Diaz M."/>
            <person name="Alape-Giron A."/>
            <person name="Jayasekera P."/>
            <person name="Lingard B."/>
            <person name="Moss D.S."/>
            <person name="Titball R.W."/>
        </authorList>
    </citation>
    <scope>MUTAGENESIS OF ASP-297; TYR-359 AND PHE-362</scope>
</reference>
<reference key="11">
    <citation type="journal article" date="1989" name="Br. J. Pharmacol.">
        <title>Contraction of the rat isolated aorta caused by Clostridium perfringens alpha toxin (phospholipase C): evidence for the involvement of arachidonic acid metabolism.</title>
        <authorList>
            <person name="Fujii Y."/>
            <person name="Sakurai J."/>
        </authorList>
    </citation>
    <scope>CHARACTERIZATION</scope>
</reference>
<reference key="12">
    <citation type="journal article" date="1990" name="FEMS Microbiol. Lett.">
        <title>The role of histidine residues in the alpha toxin of Clostridium perfringens.</title>
        <authorList>
            <person name="Titball R.W."/>
            <person name="Rubidge T."/>
        </authorList>
    </citation>
    <scope>IMPORTANCE OF ZINC</scope>
</reference>
<reference key="13">
    <citation type="journal article" date="1991" name="Infect. Immun.">
        <title>Hemolytic and sphingomyelinase activities of Clostridium perfringens alpha-toxin are dependent on a domain homologous to that of an enzyme from the human arachidonic acid pathway.</title>
        <authorList>
            <person name="Titball R.W."/>
            <person name="Leslie D.L."/>
            <person name="Harvey S."/>
            <person name="Kelly D.C."/>
        </authorList>
    </citation>
    <scope>SIMILARITY OF C-TERMINAL DOMAIN TO LIPOXYGENASES AND C-TERMINAL TRUNCATION</scope>
</reference>
<reference key="14">
    <citation type="journal article" date="1999" name="Anaerobe">
        <title>The Clostridium perfringens alpha-toxin.</title>
        <authorList>
            <person name="Titball R.W."/>
            <person name="Naylor C.E."/>
            <person name="Basak A.K."/>
        </authorList>
    </citation>
    <scope>REVIEW</scope>
</reference>
<reference key="15">
    <citation type="journal article" date="2000" name="Microbes Infect.">
        <title>Structure and function of clostridial phospholipases C.</title>
        <authorList>
            <person name="Jepson M."/>
            <person name="Titball R.W."/>
        </authorList>
    </citation>
    <scope>REVIEW</scope>
</reference>
<reference key="16">
    <citation type="journal article" date="1999" name="J. Mol. Biol.">
        <title>Characterisation of the calcium-binding C-terminal domain of Clostridium perfringens alpha-toxin.</title>
        <authorList>
            <person name="Naylor C.E."/>
            <person name="Jepson M."/>
            <person name="Crane D.T."/>
            <person name="Titball R.W."/>
            <person name="Miller J."/>
            <person name="Basak A.K."/>
            <person name="Bolgiano B."/>
        </authorList>
    </citation>
    <scope>X-RAY CRYSTALLOGRAPHY (2.2 ANGSTROMS) OF 29-398 OF THE CALCIUM-BOUND CLOSED FORM</scope>
</reference>
<organism>
    <name type="scientific">Clostridium perfringens (strain ATCC 13124 / DSM 756 / JCM 1290 / NCIMB 6125 / NCTC 8237 / Type A)</name>
    <dbReference type="NCBI Taxonomy" id="195103"/>
    <lineage>
        <taxon>Bacteria</taxon>
        <taxon>Bacillati</taxon>
        <taxon>Bacillota</taxon>
        <taxon>Clostridia</taxon>
        <taxon>Eubacteriales</taxon>
        <taxon>Clostridiaceae</taxon>
        <taxon>Clostridium</taxon>
    </lineage>
</organism>
<evidence type="ECO:0000255" key="1">
    <source>
        <dbReference type="PROSITE-ProRule" id="PRU00152"/>
    </source>
</evidence>
<evidence type="ECO:0000255" key="2">
    <source>
        <dbReference type="PROSITE-ProRule" id="PRU00678"/>
    </source>
</evidence>
<evidence type="ECO:0000269" key="3">
    <source>
    </source>
</evidence>
<evidence type="ECO:0000269" key="4">
    <source>
    </source>
</evidence>
<evidence type="ECO:0000269" key="5">
    <source>
    </source>
</evidence>
<evidence type="ECO:0000269" key="6">
    <source>
    </source>
</evidence>
<evidence type="ECO:0000269" key="7">
    <source>
    </source>
</evidence>
<evidence type="ECO:0000269" key="8">
    <source>
    </source>
</evidence>
<evidence type="ECO:0000305" key="9"/>
<evidence type="ECO:0007829" key="10">
    <source>
        <dbReference type="PDB" id="1QMD"/>
    </source>
</evidence>
<evidence type="ECO:0007829" key="11">
    <source>
        <dbReference type="PDB" id="2WXT"/>
    </source>
</evidence>
<evidence type="ECO:0007829" key="12">
    <source>
        <dbReference type="PDB" id="2WXU"/>
    </source>
</evidence>
<evidence type="ECO:0007829" key="13">
    <source>
        <dbReference type="PDB" id="2WY6"/>
    </source>
</evidence>
<accession>Q0TV31</accession>
<accession>P15310</accession>
<accession>P94658</accession>
<accession>Q46246</accession>
<accession>Q46279</accession>
<accession>Q46280</accession>
<accession>Q46281</accession>
<accession>Q46282</accession>
<accession>Q57317</accession>
<accession>Q59303</accession>
<accession>Q59304</accession>
<accession>Q59305</accession>
<accession>Q59313</accession>
<accession>Q60121</accession>
<feature type="signal peptide" evidence="6 7">
    <location>
        <begin position="1"/>
        <end position="28"/>
    </location>
</feature>
<feature type="chain" id="PRO_0000259456" description="Phospholipase C">
    <location>
        <begin position="29"/>
        <end position="398"/>
    </location>
</feature>
<feature type="domain" description="Zn-dependent PLC" evidence="2">
    <location>
        <begin position="29"/>
        <end position="278"/>
    </location>
</feature>
<feature type="domain" description="PLAT" evidence="1">
    <location>
        <begin position="284"/>
        <end position="398"/>
    </location>
</feature>
<feature type="region of interest" description="Linker">
    <location>
        <begin position="275"/>
        <end position="283"/>
    </location>
</feature>
<feature type="binding site">
    <location>
        <position position="29"/>
    </location>
    <ligand>
        <name>Zn(2+)</name>
        <dbReference type="ChEBI" id="CHEBI:29105"/>
        <label>1</label>
    </ligand>
</feature>
<feature type="binding site">
    <location>
        <position position="39"/>
    </location>
    <ligand>
        <name>Zn(2+)</name>
        <dbReference type="ChEBI" id="CHEBI:29105"/>
        <label>1</label>
    </ligand>
</feature>
<feature type="binding site">
    <location>
        <position position="84"/>
    </location>
    <ligand>
        <name>Zn(2+)</name>
        <dbReference type="ChEBI" id="CHEBI:29105"/>
        <label>3</label>
    </ligand>
</feature>
<feature type="binding site">
    <location>
        <position position="96"/>
    </location>
    <ligand>
        <name>Zn(2+)</name>
        <dbReference type="ChEBI" id="CHEBI:29105"/>
        <label>3</label>
    </ligand>
</feature>
<feature type="binding site">
    <location>
        <position position="154"/>
    </location>
    <ligand>
        <name>Zn(2+)</name>
        <dbReference type="ChEBI" id="CHEBI:29105"/>
        <label>3</label>
    </ligand>
</feature>
<feature type="binding site">
    <location>
        <position position="158"/>
    </location>
    <ligand>
        <name>Zn(2+)</name>
        <dbReference type="ChEBI" id="CHEBI:29105"/>
        <label>1</label>
    </ligand>
</feature>
<feature type="binding site">
    <location>
        <position position="158"/>
    </location>
    <ligand>
        <name>Zn(2+)</name>
        <dbReference type="ChEBI" id="CHEBI:29105"/>
        <label>3</label>
    </ligand>
</feature>
<feature type="binding site" evidence="9">
    <location>
        <position position="164"/>
    </location>
    <ligand>
        <name>Zn(2+)</name>
        <dbReference type="ChEBI" id="CHEBI:29105"/>
        <label>2</label>
    </ligand>
</feature>
<feature type="binding site" evidence="9">
    <location>
        <position position="176"/>
    </location>
    <ligand>
        <name>Zn(2+)</name>
        <dbReference type="ChEBI" id="CHEBI:29105"/>
        <label>2</label>
    </ligand>
</feature>
<feature type="binding site" evidence="9">
    <location>
        <position position="180"/>
    </location>
    <ligand>
        <name>Zn(2+)</name>
        <dbReference type="ChEBI" id="CHEBI:29105"/>
        <label>2</label>
    </ligand>
</feature>
<feature type="binding site">
    <location>
        <position position="297"/>
    </location>
    <ligand>
        <name>Ca(2+)</name>
        <dbReference type="ChEBI" id="CHEBI:29108"/>
        <label>1</label>
    </ligand>
</feature>
<feature type="binding site">
    <location>
        <position position="299"/>
    </location>
    <ligand>
        <name>Ca(2+)</name>
        <dbReference type="ChEBI" id="CHEBI:29108"/>
        <label>1</label>
    </ligand>
</feature>
<feature type="binding site">
    <location>
        <position position="300"/>
    </location>
    <ligand>
        <name>Ca(2+)</name>
        <dbReference type="ChEBI" id="CHEBI:29108"/>
        <label>3</label>
    </ligand>
</feature>
<feature type="binding site">
    <location>
        <position position="301"/>
    </location>
    <ligand>
        <name>Ca(2+)</name>
        <dbReference type="ChEBI" id="CHEBI:29108"/>
        <label>3</label>
    </ligand>
</feature>
<feature type="binding site">
    <location>
        <position position="321"/>
    </location>
    <ligand>
        <name>Ca(2+)</name>
        <dbReference type="ChEBI" id="CHEBI:29108"/>
        <label>2</label>
    </ligand>
</feature>
<feature type="binding site">
    <location>
        <position position="322"/>
    </location>
    <ligand>
        <name>Ca(2+)</name>
        <dbReference type="ChEBI" id="CHEBI:29108"/>
        <label>2</label>
    </ligand>
</feature>
<feature type="binding site">
    <location>
        <position position="324"/>
    </location>
    <ligand>
        <name>Ca(2+)</name>
        <dbReference type="ChEBI" id="CHEBI:29108"/>
        <label>2</label>
    </ligand>
</feature>
<feature type="binding site">
    <location>
        <position position="325"/>
    </location>
    <ligand>
        <name>Ca(2+)</name>
        <dbReference type="ChEBI" id="CHEBI:29108"/>
        <label>3</label>
    </ligand>
</feature>
<feature type="binding site">
    <location>
        <position position="326"/>
    </location>
    <ligand>
        <name>Ca(2+)</name>
        <dbReference type="ChEBI" id="CHEBI:29108"/>
        <label>2</label>
    </ligand>
</feature>
<feature type="binding site">
    <location>
        <position position="326"/>
    </location>
    <ligand>
        <name>Ca(2+)</name>
        <dbReference type="ChEBI" id="CHEBI:29108"/>
        <label>3</label>
    </ligand>
</feature>
<feature type="binding site">
    <location>
        <position position="364"/>
    </location>
    <ligand>
        <name>Ca(2+)</name>
        <dbReference type="ChEBI" id="CHEBI:29108"/>
        <label>1</label>
    </ligand>
</feature>
<feature type="binding site">
    <location>
        <position position="365"/>
    </location>
    <ligand>
        <name>Ca(2+)</name>
        <dbReference type="ChEBI" id="CHEBI:29108"/>
        <label>1</label>
    </ligand>
</feature>
<feature type="mutagenesis site" description="Loss of sphingomyelinase, hemolytic activity and lethality." evidence="8">
    <location>
        <begin position="278"/>
        <end position="398"/>
    </location>
</feature>
<feature type="mutagenesis site" description="Binds less Ca(2+), small decrease in PLC, sphingomyelinase and myotoxicity, increased hemolytic and cytotoxic activities." evidence="3 5">
    <original>D</original>
    <variation>Y</variation>
    <location>
        <position position="297"/>
    </location>
</feature>
<feature type="mutagenesis site" description="Increased dependence of PLC on Ca(2+). Dramatically decreases hemolytic, cytotoxic and myotoxic activities." evidence="3">
    <original>Y</original>
    <variation>F</variation>
    <variation>N</variation>
    <location>
        <position position="303"/>
    </location>
</feature>
<feature type="mutagenesis site" description="Reduces affinity for Ca(2+), decreases toxin activity." evidence="4">
    <original>D</original>
    <variation>S</variation>
    <location>
        <position position="321"/>
    </location>
</feature>
<feature type="mutagenesis site" description="Decreases toxin activity in vivo and against aggregated substrates in vitro. May destabilize interactions between the N and C-terminal domains." evidence="4">
    <original>D</original>
    <variation>G</variation>
    <location>
        <position position="333"/>
    </location>
</feature>
<feature type="mutagenesis site" description="Dramatically decreases hemolytic and cytotoxic activities." evidence="3">
    <original>Y</original>
    <variation>F</variation>
    <location>
        <position position="335"/>
    </location>
</feature>
<feature type="mutagenesis site" description="Decreases toxin activity in vivo and against aggregated substrates in vitro." evidence="4">
    <original>K</original>
    <variation>E</variation>
    <location>
        <position position="358"/>
    </location>
</feature>
<feature type="mutagenesis site" description="Dramatically decreases hemolytic and cytotoxic activities." evidence="3 5">
    <original>Y</original>
    <variation>F</variation>
    <variation>L</variation>
    <location>
        <position position="359"/>
    </location>
</feature>
<feature type="mutagenesis site" description="Dramatically decreases sphingomyelinase, cytotoxicity and hemolytic and myotoxic activities." evidence="5">
    <original>F</original>
    <variation>I</variation>
    <location>
        <position position="362"/>
    </location>
</feature>
<feature type="mutagenesis site" description="Increased dependence of PLC on Ca(2+). Dramatically decreases hemolytic, cytotoxic and myotoxic activities." evidence="3">
    <original>D</original>
    <variation>N</variation>
    <location>
        <position position="364"/>
    </location>
</feature>
<feature type="sequence conflict" description="In Ref. 3; no nucleotide entry." evidence="9" ref="3">
    <original>S</original>
    <variation>T</variation>
    <location>
        <position position="17"/>
    </location>
</feature>
<feature type="turn" evidence="12">
    <location>
        <begin position="33"/>
        <end position="35"/>
    </location>
</feature>
<feature type="helix" evidence="12">
    <location>
        <begin position="38"/>
        <end position="53"/>
    </location>
</feature>
<feature type="helix" evidence="12">
    <location>
        <begin position="60"/>
        <end position="71"/>
    </location>
</feature>
<feature type="helix" evidence="12">
    <location>
        <begin position="73"/>
        <end position="81"/>
    </location>
</feature>
<feature type="helix" evidence="12">
    <location>
        <begin position="82"/>
        <end position="84"/>
    </location>
</feature>
<feature type="helix" evidence="12">
    <location>
        <begin position="94"/>
        <end position="96"/>
    </location>
</feature>
<feature type="helix" evidence="10">
    <location>
        <begin position="102"/>
        <end position="107"/>
    </location>
</feature>
<feature type="strand" evidence="10">
    <location>
        <begin position="108"/>
        <end position="112"/>
    </location>
</feature>
<feature type="turn" evidence="12">
    <location>
        <begin position="113"/>
        <end position="115"/>
    </location>
</feature>
<feature type="helix" evidence="12">
    <location>
        <begin position="122"/>
        <end position="138"/>
    </location>
</feature>
<feature type="helix" evidence="12">
    <location>
        <begin position="142"/>
        <end position="159"/>
    </location>
</feature>
<feature type="turn" evidence="12">
    <location>
        <begin position="163"/>
        <end position="167"/>
    </location>
</feature>
<feature type="turn" evidence="12">
    <location>
        <begin position="170"/>
        <end position="172"/>
    </location>
</feature>
<feature type="helix" evidence="12">
    <location>
        <begin position="175"/>
        <end position="186"/>
    </location>
</feature>
<feature type="helix" evidence="12">
    <location>
        <begin position="187"/>
        <end position="190"/>
    </location>
</feature>
<feature type="helix" evidence="12">
    <location>
        <begin position="202"/>
        <end position="209"/>
    </location>
</feature>
<feature type="helix" evidence="12">
    <location>
        <begin position="213"/>
        <end position="234"/>
    </location>
</feature>
<feature type="strand" evidence="13">
    <location>
        <begin position="237"/>
        <end position="240"/>
    </location>
</feature>
<feature type="helix" evidence="12">
    <location>
        <begin position="242"/>
        <end position="273"/>
    </location>
</feature>
<feature type="turn" evidence="11">
    <location>
        <begin position="277"/>
        <end position="280"/>
    </location>
</feature>
<feature type="strand" evidence="12">
    <location>
        <begin position="285"/>
        <end position="292"/>
    </location>
</feature>
<feature type="strand" evidence="12">
    <location>
        <begin position="302"/>
        <end position="310"/>
    </location>
</feature>
<feature type="strand" evidence="12">
    <location>
        <begin position="315"/>
        <end position="319"/>
    </location>
</feature>
<feature type="strand" evidence="12">
    <location>
        <begin position="332"/>
        <end position="338"/>
    </location>
</feature>
<feature type="helix" evidence="12">
    <location>
        <begin position="346"/>
        <end position="348"/>
    </location>
</feature>
<feature type="strand" evidence="12">
    <location>
        <begin position="349"/>
        <end position="357"/>
    </location>
</feature>
<feature type="strand" evidence="12">
    <location>
        <begin position="359"/>
        <end position="362"/>
    </location>
</feature>
<feature type="strand" evidence="12">
    <location>
        <begin position="368"/>
        <end position="375"/>
    </location>
</feature>
<feature type="strand" evidence="12">
    <location>
        <begin position="378"/>
        <end position="384"/>
    </location>
</feature>
<feature type="strand" evidence="12">
    <location>
        <begin position="394"/>
        <end position="398"/>
    </location>
</feature>
<protein>
    <recommendedName>
        <fullName>Phospholipase C</fullName>
        <shortName>PLC</shortName>
        <ecNumber>3.1.4.3</ecNumber>
    </recommendedName>
    <alternativeName>
        <fullName>Alpha-toxin</fullName>
    </alternativeName>
    <alternativeName>
        <fullName>Hemolysin</fullName>
    </alternativeName>
    <alternativeName>
        <fullName>Lecithinase</fullName>
    </alternativeName>
    <alternativeName>
        <fullName>Phosphatidylcholine cholinephosphohydrolase</fullName>
    </alternativeName>
</protein>
<proteinExistence type="evidence at protein level"/>
<gene>
    <name type="primary">plc</name>
    <name type="synonym">cpa</name>
    <name type="ordered locus">CPF_0042</name>
</gene>
<dbReference type="EC" id="3.1.4.3"/>
<dbReference type="EMBL" id="M24904">
    <property type="protein sequence ID" value="AAA23272.1"/>
    <property type="molecule type" value="Genomic_DNA"/>
</dbReference>
<dbReference type="EMBL" id="X13608">
    <property type="protein sequence ID" value="CAA31943.1"/>
    <property type="molecule type" value="Genomic_DNA"/>
</dbReference>
<dbReference type="EMBL" id="CP000246">
    <property type="protein sequence ID" value="ABG84486.1"/>
    <property type="molecule type" value="Genomic_DNA"/>
</dbReference>
<dbReference type="PIR" id="A30565">
    <property type="entry name" value="A30565"/>
</dbReference>
<dbReference type="RefSeq" id="WP_011590041.1">
    <property type="nucleotide sequence ID" value="NC_008261.1"/>
</dbReference>
<dbReference type="PDB" id="1QM6">
    <property type="method" value="X-ray"/>
    <property type="resolution" value="2.50 A"/>
    <property type="chains" value="A/B=29-398"/>
</dbReference>
<dbReference type="PDB" id="1QMD">
    <property type="method" value="X-ray"/>
    <property type="resolution" value="2.20 A"/>
    <property type="chains" value="A/B=29-398"/>
</dbReference>
<dbReference type="PDB" id="2WXT">
    <property type="method" value="X-ray"/>
    <property type="resolution" value="2.00 A"/>
    <property type="chains" value="A=29-398"/>
</dbReference>
<dbReference type="PDB" id="2WXU">
    <property type="method" value="X-ray"/>
    <property type="resolution" value="1.80 A"/>
    <property type="chains" value="A=29-398"/>
</dbReference>
<dbReference type="PDB" id="2WY6">
    <property type="method" value="X-ray"/>
    <property type="resolution" value="3.20 A"/>
    <property type="chains" value="A/B/C=29-398"/>
</dbReference>
<dbReference type="PDBsum" id="1QM6"/>
<dbReference type="PDBsum" id="1QMD"/>
<dbReference type="PDBsum" id="2WXT"/>
<dbReference type="PDBsum" id="2WXU"/>
<dbReference type="PDBsum" id="2WY6"/>
<dbReference type="SMR" id="Q0TV31"/>
<dbReference type="STRING" id="195103.CPF_0042"/>
<dbReference type="PaxDb" id="195103-CPF_0042"/>
<dbReference type="KEGG" id="cpf:CPF_0042"/>
<dbReference type="eggNOG" id="ENOG5033QPJ">
    <property type="taxonomic scope" value="Bacteria"/>
</dbReference>
<dbReference type="HOGENOM" id="CLU_690198_0_0_9"/>
<dbReference type="EvolutionaryTrace" id="Q0TV31"/>
<dbReference type="Proteomes" id="UP000001823">
    <property type="component" value="Chromosome"/>
</dbReference>
<dbReference type="GO" id="GO:0005576">
    <property type="term" value="C:extracellular region"/>
    <property type="evidence" value="ECO:0007669"/>
    <property type="project" value="UniProtKB-SubCell"/>
</dbReference>
<dbReference type="GO" id="GO:0016787">
    <property type="term" value="F:hydrolase activity"/>
    <property type="evidence" value="ECO:0000314"/>
    <property type="project" value="CACAO"/>
</dbReference>
<dbReference type="GO" id="GO:0034480">
    <property type="term" value="F:phosphatidylcholine phospholipase C activity"/>
    <property type="evidence" value="ECO:0007669"/>
    <property type="project" value="UniProtKB-EC"/>
</dbReference>
<dbReference type="GO" id="GO:0090729">
    <property type="term" value="F:toxin activity"/>
    <property type="evidence" value="ECO:0007669"/>
    <property type="project" value="UniProtKB-KW"/>
</dbReference>
<dbReference type="GO" id="GO:0008270">
    <property type="term" value="F:zinc ion binding"/>
    <property type="evidence" value="ECO:0007669"/>
    <property type="project" value="InterPro"/>
</dbReference>
<dbReference type="GO" id="GO:0044179">
    <property type="term" value="P:hemolysis in another organism"/>
    <property type="evidence" value="ECO:0000314"/>
    <property type="project" value="CACAO"/>
</dbReference>
<dbReference type="GO" id="GO:0001907">
    <property type="term" value="P:symbiont-mediated killing of host cell"/>
    <property type="evidence" value="ECO:0000269"/>
    <property type="project" value="SigSci"/>
</dbReference>
<dbReference type="CDD" id="cd00113">
    <property type="entry name" value="PLAT"/>
    <property type="match status" value="1"/>
</dbReference>
<dbReference type="CDD" id="cd10981">
    <property type="entry name" value="ZnPC_S1P1"/>
    <property type="match status" value="1"/>
</dbReference>
<dbReference type="Gene3D" id="1.10.575.10">
    <property type="entry name" value="P1 Nuclease"/>
    <property type="match status" value="1"/>
</dbReference>
<dbReference type="Gene3D" id="2.60.60.20">
    <property type="entry name" value="PLAT/LH2 domain"/>
    <property type="match status" value="1"/>
</dbReference>
<dbReference type="InterPro" id="IPR001024">
    <property type="entry name" value="PLAT/LH2_dom"/>
</dbReference>
<dbReference type="InterPro" id="IPR036392">
    <property type="entry name" value="PLAT/LH2_dom_sf"/>
</dbReference>
<dbReference type="InterPro" id="IPR008947">
    <property type="entry name" value="PLipase_C/P1_nuclease_dom_sf"/>
</dbReference>
<dbReference type="InterPro" id="IPR029002">
    <property type="entry name" value="PLPC/GPLD1"/>
</dbReference>
<dbReference type="InterPro" id="IPR001531">
    <property type="entry name" value="Zn_PLipaseC"/>
</dbReference>
<dbReference type="Pfam" id="PF01477">
    <property type="entry name" value="PLAT"/>
    <property type="match status" value="1"/>
</dbReference>
<dbReference type="Pfam" id="PF00882">
    <property type="entry name" value="Zn_dep_PLPC"/>
    <property type="match status" value="1"/>
</dbReference>
<dbReference type="PRINTS" id="PR00479">
    <property type="entry name" value="PRPHPHLPASEC"/>
</dbReference>
<dbReference type="SMART" id="SM00770">
    <property type="entry name" value="Zn_dep_PLPC"/>
    <property type="match status" value="1"/>
</dbReference>
<dbReference type="SUPFAM" id="SSF49723">
    <property type="entry name" value="Lipase/lipooxygenase domain (PLAT/LH2 domain)"/>
    <property type="match status" value="1"/>
</dbReference>
<dbReference type="SUPFAM" id="SSF48537">
    <property type="entry name" value="Phospholipase C/P1 nuclease"/>
    <property type="match status" value="1"/>
</dbReference>
<dbReference type="PROSITE" id="PS50095">
    <property type="entry name" value="PLAT"/>
    <property type="match status" value="1"/>
</dbReference>
<dbReference type="PROSITE" id="PS00384">
    <property type="entry name" value="PROKAR_ZN_DEPEND_PLPC_1"/>
    <property type="match status" value="1"/>
</dbReference>
<dbReference type="PROSITE" id="PS51346">
    <property type="entry name" value="PROKAR_ZN_DEPEND_PLPC_2"/>
    <property type="match status" value="1"/>
</dbReference>